<protein>
    <recommendedName>
        <fullName evidence="1">tRNA(Ile)-lysidine synthase</fullName>
        <ecNumber evidence="1">6.3.4.19</ecNumber>
    </recommendedName>
    <alternativeName>
        <fullName evidence="1">tRNA(Ile)-2-lysyl-cytidine synthase</fullName>
    </alternativeName>
    <alternativeName>
        <fullName evidence="1">tRNA(Ile)-lysidine synthetase</fullName>
    </alternativeName>
</protein>
<dbReference type="EC" id="6.3.4.19" evidence="1"/>
<dbReference type="EMBL" id="BA000039">
    <property type="protein sequence ID" value="BAC09168.1"/>
    <property type="molecule type" value="Genomic_DNA"/>
</dbReference>
<dbReference type="RefSeq" id="NP_682406.1">
    <property type="nucleotide sequence ID" value="NC_004113.1"/>
</dbReference>
<dbReference type="RefSeq" id="WP_011057455.1">
    <property type="nucleotide sequence ID" value="NC_004113.1"/>
</dbReference>
<dbReference type="SMR" id="Q8DIH2"/>
<dbReference type="STRING" id="197221.gene:10748218"/>
<dbReference type="EnsemblBacteria" id="BAC09168">
    <property type="protein sequence ID" value="BAC09168"/>
    <property type="gene ID" value="BAC09168"/>
</dbReference>
<dbReference type="KEGG" id="tel:tlr1616"/>
<dbReference type="eggNOG" id="COG0037">
    <property type="taxonomic scope" value="Bacteria"/>
</dbReference>
<dbReference type="Proteomes" id="UP000000440">
    <property type="component" value="Chromosome"/>
</dbReference>
<dbReference type="GO" id="GO:0005737">
    <property type="term" value="C:cytoplasm"/>
    <property type="evidence" value="ECO:0007669"/>
    <property type="project" value="UniProtKB-SubCell"/>
</dbReference>
<dbReference type="GO" id="GO:0005524">
    <property type="term" value="F:ATP binding"/>
    <property type="evidence" value="ECO:0007669"/>
    <property type="project" value="UniProtKB-UniRule"/>
</dbReference>
<dbReference type="GO" id="GO:0032267">
    <property type="term" value="F:tRNA(Ile)-lysidine synthase activity"/>
    <property type="evidence" value="ECO:0007669"/>
    <property type="project" value="UniProtKB-EC"/>
</dbReference>
<dbReference type="GO" id="GO:0006400">
    <property type="term" value="P:tRNA modification"/>
    <property type="evidence" value="ECO:0007669"/>
    <property type="project" value="UniProtKB-UniRule"/>
</dbReference>
<dbReference type="CDD" id="cd01992">
    <property type="entry name" value="TilS_N"/>
    <property type="match status" value="1"/>
</dbReference>
<dbReference type="Gene3D" id="1.20.59.20">
    <property type="match status" value="1"/>
</dbReference>
<dbReference type="Gene3D" id="3.40.50.620">
    <property type="entry name" value="HUPs"/>
    <property type="match status" value="1"/>
</dbReference>
<dbReference type="HAMAP" id="MF_01161">
    <property type="entry name" value="tRNA_Ile_lys_synt"/>
    <property type="match status" value="1"/>
</dbReference>
<dbReference type="InterPro" id="IPR014729">
    <property type="entry name" value="Rossmann-like_a/b/a_fold"/>
</dbReference>
<dbReference type="InterPro" id="IPR011063">
    <property type="entry name" value="TilS/TtcA_N"/>
</dbReference>
<dbReference type="InterPro" id="IPR012094">
    <property type="entry name" value="tRNA_Ile_lys_synt"/>
</dbReference>
<dbReference type="InterPro" id="IPR012795">
    <property type="entry name" value="tRNA_Ile_lys_synt_N"/>
</dbReference>
<dbReference type="InterPro" id="IPR015262">
    <property type="entry name" value="tRNA_Ile_lys_synt_subst-bd"/>
</dbReference>
<dbReference type="NCBIfam" id="TIGR02432">
    <property type="entry name" value="lysidine_TilS_N"/>
    <property type="match status" value="1"/>
</dbReference>
<dbReference type="PANTHER" id="PTHR43033">
    <property type="entry name" value="TRNA(ILE)-LYSIDINE SYNTHASE-RELATED"/>
    <property type="match status" value="1"/>
</dbReference>
<dbReference type="PANTHER" id="PTHR43033:SF1">
    <property type="entry name" value="TRNA(ILE)-LYSIDINE SYNTHASE-RELATED"/>
    <property type="match status" value="1"/>
</dbReference>
<dbReference type="Pfam" id="PF01171">
    <property type="entry name" value="ATP_bind_3"/>
    <property type="match status" value="1"/>
</dbReference>
<dbReference type="Pfam" id="PF09179">
    <property type="entry name" value="TilS"/>
    <property type="match status" value="1"/>
</dbReference>
<dbReference type="SUPFAM" id="SSF52402">
    <property type="entry name" value="Adenine nucleotide alpha hydrolases-like"/>
    <property type="match status" value="1"/>
</dbReference>
<dbReference type="SUPFAM" id="SSF82829">
    <property type="entry name" value="MesJ substrate recognition domain-like"/>
    <property type="match status" value="1"/>
</dbReference>
<proteinExistence type="inferred from homology"/>
<keyword id="KW-0067">ATP-binding</keyword>
<keyword id="KW-0963">Cytoplasm</keyword>
<keyword id="KW-0436">Ligase</keyword>
<keyword id="KW-0547">Nucleotide-binding</keyword>
<keyword id="KW-1185">Reference proteome</keyword>
<keyword id="KW-0819">tRNA processing</keyword>
<name>TILS_THEVB</name>
<evidence type="ECO:0000255" key="1">
    <source>
        <dbReference type="HAMAP-Rule" id="MF_01161"/>
    </source>
</evidence>
<evidence type="ECO:0000256" key="2">
    <source>
        <dbReference type="SAM" id="MobiDB-lite"/>
    </source>
</evidence>
<organism>
    <name type="scientific">Thermosynechococcus vestitus (strain NIES-2133 / IAM M-273 / BP-1)</name>
    <dbReference type="NCBI Taxonomy" id="197221"/>
    <lineage>
        <taxon>Bacteria</taxon>
        <taxon>Bacillati</taxon>
        <taxon>Cyanobacteriota</taxon>
        <taxon>Cyanophyceae</taxon>
        <taxon>Acaryochloridales</taxon>
        <taxon>Thermosynechococcaceae</taxon>
        <taxon>Thermosynechococcus</taxon>
    </lineage>
</organism>
<feature type="chain" id="PRO_0000181787" description="tRNA(Ile)-lysidine synthase">
    <location>
        <begin position="1"/>
        <end position="344"/>
    </location>
</feature>
<feature type="region of interest" description="Disordered" evidence="2">
    <location>
        <begin position="323"/>
        <end position="344"/>
    </location>
</feature>
<feature type="binding site" evidence="1">
    <location>
        <begin position="30"/>
        <end position="35"/>
    </location>
    <ligand>
        <name>ATP</name>
        <dbReference type="ChEBI" id="CHEBI:30616"/>
    </ligand>
</feature>
<sequence length="344" mass="38878">MWGIHHARLHTTLKTQQWLPLGSRILIALSGGQDSVCLTRLLLDLQPHWQWSLVAVHCDHRWRADSTANANFVQQLAQKWHLPCEVVSAPDLPKTEAAARSWRYQVFESVAKALDCTHVVTAHTQSDRAESLLLHLLRGTSPDGLATLLPSRSLGAIQLVRPLLGMTRAQTAAFCQAYGLPIWQDETNHNLEYRRNRLRLELIPYLQQHFNPNVEEALAQTAELLASDRAYFEAEVERLAPTVLREHPPALDRLRLREFPLALQRRLIQCFLRQHLKRGLNFRVIEAVRALMTTGNGSQTASLPGGQHLRVCGRWIELVRPMPPPPAPVPPDPGERSPPPSPLY</sequence>
<accession>Q8DIH2</accession>
<gene>
    <name evidence="1" type="primary">tilS</name>
    <name type="ordered locus">tlr1616</name>
</gene>
<comment type="function">
    <text evidence="1">Ligates lysine onto the cytidine present at position 34 of the AUA codon-specific tRNA(Ile) that contains the anticodon CAU, in an ATP-dependent manner. Cytidine is converted to lysidine, thus changing the amino acid specificity of the tRNA from methionine to isoleucine.</text>
</comment>
<comment type="catalytic activity">
    <reaction evidence="1">
        <text>cytidine(34) in tRNA(Ile2) + L-lysine + ATP = lysidine(34) in tRNA(Ile2) + AMP + diphosphate + H(+)</text>
        <dbReference type="Rhea" id="RHEA:43744"/>
        <dbReference type="Rhea" id="RHEA-COMP:10625"/>
        <dbReference type="Rhea" id="RHEA-COMP:10670"/>
        <dbReference type="ChEBI" id="CHEBI:15378"/>
        <dbReference type="ChEBI" id="CHEBI:30616"/>
        <dbReference type="ChEBI" id="CHEBI:32551"/>
        <dbReference type="ChEBI" id="CHEBI:33019"/>
        <dbReference type="ChEBI" id="CHEBI:82748"/>
        <dbReference type="ChEBI" id="CHEBI:83665"/>
        <dbReference type="ChEBI" id="CHEBI:456215"/>
        <dbReference type="EC" id="6.3.4.19"/>
    </reaction>
</comment>
<comment type="subcellular location">
    <subcellularLocation>
        <location evidence="1">Cytoplasm</location>
    </subcellularLocation>
</comment>
<comment type="domain">
    <text>The N-terminal region contains the highly conserved SGGXDS motif, predicted to be a P-loop motif involved in ATP binding.</text>
</comment>
<comment type="similarity">
    <text evidence="1">Belongs to the tRNA(Ile)-lysidine synthase family.</text>
</comment>
<reference key="1">
    <citation type="journal article" date="2002" name="DNA Res.">
        <title>Complete genome structure of the thermophilic cyanobacterium Thermosynechococcus elongatus BP-1.</title>
        <authorList>
            <person name="Nakamura Y."/>
            <person name="Kaneko T."/>
            <person name="Sato S."/>
            <person name="Ikeuchi M."/>
            <person name="Katoh H."/>
            <person name="Sasamoto S."/>
            <person name="Watanabe A."/>
            <person name="Iriguchi M."/>
            <person name="Kawashima K."/>
            <person name="Kimura T."/>
            <person name="Kishida Y."/>
            <person name="Kiyokawa C."/>
            <person name="Kohara M."/>
            <person name="Matsumoto M."/>
            <person name="Matsuno A."/>
            <person name="Nakazaki N."/>
            <person name="Shimpo S."/>
            <person name="Sugimoto M."/>
            <person name="Takeuchi C."/>
            <person name="Yamada M."/>
            <person name="Tabata S."/>
        </authorList>
    </citation>
    <scope>NUCLEOTIDE SEQUENCE [LARGE SCALE GENOMIC DNA]</scope>
    <source>
        <strain>NIES-2133 / IAM M-273 / BP-1</strain>
    </source>
</reference>